<reference key="1">
    <citation type="journal article" date="2000" name="Nature">
        <title>Sequence and analysis of chromosome 1 of the plant Arabidopsis thaliana.</title>
        <authorList>
            <person name="Theologis A."/>
            <person name="Ecker J.R."/>
            <person name="Palm C.J."/>
            <person name="Federspiel N.A."/>
            <person name="Kaul S."/>
            <person name="White O."/>
            <person name="Alonso J."/>
            <person name="Altafi H."/>
            <person name="Araujo R."/>
            <person name="Bowman C.L."/>
            <person name="Brooks S.Y."/>
            <person name="Buehler E."/>
            <person name="Chan A."/>
            <person name="Chao Q."/>
            <person name="Chen H."/>
            <person name="Cheuk R.F."/>
            <person name="Chin C.W."/>
            <person name="Chung M.K."/>
            <person name="Conn L."/>
            <person name="Conway A.B."/>
            <person name="Conway A.R."/>
            <person name="Creasy T.H."/>
            <person name="Dewar K."/>
            <person name="Dunn P."/>
            <person name="Etgu P."/>
            <person name="Feldblyum T.V."/>
            <person name="Feng J.-D."/>
            <person name="Fong B."/>
            <person name="Fujii C.Y."/>
            <person name="Gill J.E."/>
            <person name="Goldsmith A.D."/>
            <person name="Haas B."/>
            <person name="Hansen N.F."/>
            <person name="Hughes B."/>
            <person name="Huizar L."/>
            <person name="Hunter J.L."/>
            <person name="Jenkins J."/>
            <person name="Johnson-Hopson C."/>
            <person name="Khan S."/>
            <person name="Khaykin E."/>
            <person name="Kim C.J."/>
            <person name="Koo H.L."/>
            <person name="Kremenetskaia I."/>
            <person name="Kurtz D.B."/>
            <person name="Kwan A."/>
            <person name="Lam B."/>
            <person name="Langin-Hooper S."/>
            <person name="Lee A."/>
            <person name="Lee J.M."/>
            <person name="Lenz C.A."/>
            <person name="Li J.H."/>
            <person name="Li Y.-P."/>
            <person name="Lin X."/>
            <person name="Liu S.X."/>
            <person name="Liu Z.A."/>
            <person name="Luros J.S."/>
            <person name="Maiti R."/>
            <person name="Marziali A."/>
            <person name="Militscher J."/>
            <person name="Miranda M."/>
            <person name="Nguyen M."/>
            <person name="Nierman W.C."/>
            <person name="Osborne B.I."/>
            <person name="Pai G."/>
            <person name="Peterson J."/>
            <person name="Pham P.K."/>
            <person name="Rizzo M."/>
            <person name="Rooney T."/>
            <person name="Rowley D."/>
            <person name="Sakano H."/>
            <person name="Salzberg S.L."/>
            <person name="Schwartz J.R."/>
            <person name="Shinn P."/>
            <person name="Southwick A.M."/>
            <person name="Sun H."/>
            <person name="Tallon L.J."/>
            <person name="Tambunga G."/>
            <person name="Toriumi M.J."/>
            <person name="Town C.D."/>
            <person name="Utterback T."/>
            <person name="Van Aken S."/>
            <person name="Vaysberg M."/>
            <person name="Vysotskaia V.S."/>
            <person name="Walker M."/>
            <person name="Wu D."/>
            <person name="Yu G."/>
            <person name="Fraser C.M."/>
            <person name="Venter J.C."/>
            <person name="Davis R.W."/>
        </authorList>
    </citation>
    <scope>NUCLEOTIDE SEQUENCE [LARGE SCALE GENOMIC DNA]</scope>
    <source>
        <strain>cv. Columbia</strain>
    </source>
</reference>
<reference key="2">
    <citation type="journal article" date="2017" name="Plant J.">
        <title>Araport11: a complete reannotation of the Arabidopsis thaliana reference genome.</title>
        <authorList>
            <person name="Cheng C.Y."/>
            <person name="Krishnakumar V."/>
            <person name="Chan A.P."/>
            <person name="Thibaud-Nissen F."/>
            <person name="Schobel S."/>
            <person name="Town C.D."/>
        </authorList>
    </citation>
    <scope>GENOME REANNOTATION</scope>
    <source>
        <strain>cv. Columbia</strain>
    </source>
</reference>
<reference key="3">
    <citation type="submission" date="2004-10" db="EMBL/GenBank/DDBJ databases">
        <title>Arabidopsis ORF clones.</title>
        <authorList>
            <person name="Cheuk R.F."/>
            <person name="Chen H."/>
            <person name="Kim C.J."/>
            <person name="Shinn P."/>
            <person name="Ecker J.R."/>
        </authorList>
    </citation>
    <scope>NUCLEOTIDE SEQUENCE [LARGE SCALE MRNA]</scope>
    <source>
        <strain>cv. Columbia</strain>
    </source>
</reference>
<name>ADSL2_ARATH</name>
<proteinExistence type="evidence at transcript level"/>
<keyword id="KW-0256">Endoplasmic reticulum</keyword>
<keyword id="KW-0275">Fatty acid biosynthesis</keyword>
<keyword id="KW-0276">Fatty acid metabolism</keyword>
<keyword id="KW-0408">Iron</keyword>
<keyword id="KW-0444">Lipid biosynthesis</keyword>
<keyword id="KW-0443">Lipid metabolism</keyword>
<keyword id="KW-0472">Membrane</keyword>
<keyword id="KW-0560">Oxidoreductase</keyword>
<keyword id="KW-1185">Reference proteome</keyword>
<keyword id="KW-0812">Transmembrane</keyword>
<keyword id="KW-1133">Transmembrane helix</keyword>
<organism>
    <name type="scientific">Arabidopsis thaliana</name>
    <name type="common">Mouse-ear cress</name>
    <dbReference type="NCBI Taxonomy" id="3702"/>
    <lineage>
        <taxon>Eukaryota</taxon>
        <taxon>Viridiplantae</taxon>
        <taxon>Streptophyta</taxon>
        <taxon>Embryophyta</taxon>
        <taxon>Tracheophyta</taxon>
        <taxon>Spermatophyta</taxon>
        <taxon>Magnoliopsida</taxon>
        <taxon>eudicotyledons</taxon>
        <taxon>Gunneridae</taxon>
        <taxon>Pentapetalae</taxon>
        <taxon>rosids</taxon>
        <taxon>malvids</taxon>
        <taxon>Brassicales</taxon>
        <taxon>Brassicaceae</taxon>
        <taxon>Camelineae</taxon>
        <taxon>Arabidopsis</taxon>
    </lineage>
</organism>
<feature type="chain" id="PRO_0000185428" description="Delta-9 desaturase-like 2 protein">
    <location>
        <begin position="1"/>
        <end position="299"/>
    </location>
</feature>
<feature type="transmembrane region" description="Helical" evidence="2">
    <location>
        <begin position="55"/>
        <end position="75"/>
    </location>
</feature>
<feature type="transmembrane region" description="Helical" evidence="2">
    <location>
        <begin position="174"/>
        <end position="194"/>
    </location>
</feature>
<feature type="transmembrane region" description="Helical" evidence="2">
    <location>
        <begin position="262"/>
        <end position="282"/>
    </location>
</feature>
<feature type="short sequence motif" description="Histidine box-1">
    <location>
        <begin position="77"/>
        <end position="82"/>
    </location>
</feature>
<feature type="short sequence motif" description="Histidine box-2">
    <location>
        <begin position="114"/>
        <end position="118"/>
    </location>
</feature>
<feature type="short sequence motif" description="Histidine box-3">
    <location>
        <begin position="246"/>
        <end position="250"/>
    </location>
</feature>
<gene>
    <name type="ordered locus">At1g06100</name>
    <name type="ORF">T21E18.15</name>
    <name type="ORF">T21E18_12</name>
</gene>
<evidence type="ECO:0000250" key="1"/>
<evidence type="ECO:0000255" key="2"/>
<evidence type="ECO:0000305" key="3"/>
<comment type="cofactor">
    <cofactor evidence="1">
        <name>Fe cation</name>
        <dbReference type="ChEBI" id="CHEBI:24875"/>
    </cofactor>
</comment>
<comment type="pathway">
    <text>Lipid metabolism; polyunsaturated fatty acid biosynthesis.</text>
</comment>
<comment type="subcellular location">
    <subcellularLocation>
        <location evidence="1">Endoplasmic reticulum membrane</location>
        <topology evidence="1">Multi-pass membrane protein</topology>
    </subcellularLocation>
</comment>
<comment type="domain">
    <text evidence="1">The histidine box domains may contain the active site and/or be involved in metal ion binding.</text>
</comment>
<comment type="similarity">
    <text evidence="3">Belongs to the fatty acid desaturase type 1 family.</text>
</comment>
<accession>Q9LND8</accession>
<protein>
    <recommendedName>
        <fullName>Delta-9 desaturase-like 2 protein</fullName>
        <ecNumber>1.14.19.-</ecNumber>
    </recommendedName>
</protein>
<sequence length="299" mass="35356">MSETTKDDGSSQKKSVRKEKRAYVLRKWTQFDVGRASTVGTVHLLCLLAPFNYKWEAFRFGIILAILTNLCITFSYHRNLTHRSFKLPKWLEYPFAYSALLALQGDPLDWVSIHRFHHQFTDSDRDPHSPIEGFWFSHVLWIFDTDYIREKCGRRNNVMDLKQQWFYRFLKKTLVLHILAFWTLIYLWGGLPYLTWTVGFGGVIGYHGTWLVNSACHICGSQAWQTNDTSRNVWWLALLTMGESWHNNHHAFETSARHGLEWYQLDITWYLIWFFQALGLATNVKLPTDAQKRKMAIRR</sequence>
<dbReference type="EC" id="1.14.19.-"/>
<dbReference type="EMBL" id="AC024174">
    <property type="protein sequence ID" value="AAF80133.1"/>
    <property type="molecule type" value="Genomic_DNA"/>
</dbReference>
<dbReference type="EMBL" id="CP002684">
    <property type="protein sequence ID" value="AEE27939.1"/>
    <property type="molecule type" value="Genomic_DNA"/>
</dbReference>
<dbReference type="EMBL" id="BT014933">
    <property type="protein sequence ID" value="AAT47784.1"/>
    <property type="molecule type" value="mRNA"/>
</dbReference>
<dbReference type="EMBL" id="BT015835">
    <property type="protein sequence ID" value="AAU94398.1"/>
    <property type="molecule type" value="mRNA"/>
</dbReference>
<dbReference type="PIR" id="C86196">
    <property type="entry name" value="C86196"/>
</dbReference>
<dbReference type="RefSeq" id="NP_172100.1">
    <property type="nucleotide sequence ID" value="NM_100491.2"/>
</dbReference>
<dbReference type="SMR" id="Q9LND8"/>
<dbReference type="FunCoup" id="Q9LND8">
    <property type="interactions" value="336"/>
</dbReference>
<dbReference type="STRING" id="3702.Q9LND8"/>
<dbReference type="PaxDb" id="3702-AT1G06100.1"/>
<dbReference type="ProteomicsDB" id="244840"/>
<dbReference type="EnsemblPlants" id="AT1G06100.1">
    <property type="protein sequence ID" value="AT1G06100.1"/>
    <property type="gene ID" value="AT1G06100"/>
</dbReference>
<dbReference type="GeneID" id="837119"/>
<dbReference type="Gramene" id="AT1G06100.1">
    <property type="protein sequence ID" value="AT1G06100.1"/>
    <property type="gene ID" value="AT1G06100"/>
</dbReference>
<dbReference type="KEGG" id="ath:AT1G06100"/>
<dbReference type="Araport" id="AT1G06100"/>
<dbReference type="TAIR" id="AT1G06100"/>
<dbReference type="eggNOG" id="KOG1600">
    <property type="taxonomic scope" value="Eukaryota"/>
</dbReference>
<dbReference type="HOGENOM" id="CLU_027359_1_0_1"/>
<dbReference type="InParanoid" id="Q9LND8"/>
<dbReference type="OMA" id="IREKCGR"/>
<dbReference type="PhylomeDB" id="Q9LND8"/>
<dbReference type="BioCyc" id="ARA:AT1G06100-MONOMER"/>
<dbReference type="UniPathway" id="UPA00658"/>
<dbReference type="PRO" id="PR:Q9LND8"/>
<dbReference type="Proteomes" id="UP000006548">
    <property type="component" value="Chromosome 1"/>
</dbReference>
<dbReference type="ExpressionAtlas" id="Q9LND8">
    <property type="expression patterns" value="baseline and differential"/>
</dbReference>
<dbReference type="GO" id="GO:0005789">
    <property type="term" value="C:endoplasmic reticulum membrane"/>
    <property type="evidence" value="ECO:0007669"/>
    <property type="project" value="UniProtKB-SubCell"/>
</dbReference>
<dbReference type="GO" id="GO:0016717">
    <property type="term" value="F:oxidoreductase activity, acting on paired donors, with oxidation of a pair of donors resulting in the reduction of molecular oxygen to two molecules of water"/>
    <property type="evidence" value="ECO:0007669"/>
    <property type="project" value="InterPro"/>
</dbReference>
<dbReference type="GO" id="GO:0006636">
    <property type="term" value="P:unsaturated fatty acid biosynthetic process"/>
    <property type="evidence" value="ECO:0007669"/>
    <property type="project" value="UniProtKB-UniPathway"/>
</dbReference>
<dbReference type="CDD" id="cd03505">
    <property type="entry name" value="Delta9-FADS-like"/>
    <property type="match status" value="1"/>
</dbReference>
<dbReference type="InterPro" id="IPR015876">
    <property type="entry name" value="Acyl-CoA_DS"/>
</dbReference>
<dbReference type="InterPro" id="IPR005804">
    <property type="entry name" value="FA_desaturase_dom"/>
</dbReference>
<dbReference type="PANTHER" id="PTHR11351">
    <property type="entry name" value="ACYL-COA DESATURASE"/>
    <property type="match status" value="1"/>
</dbReference>
<dbReference type="PANTHER" id="PTHR11351:SF71">
    <property type="entry name" value="DELTA-9 DESATURASE-LIKE 1 PROTEIN-RELATED"/>
    <property type="match status" value="1"/>
</dbReference>
<dbReference type="Pfam" id="PF00487">
    <property type="entry name" value="FA_desaturase"/>
    <property type="match status" value="1"/>
</dbReference>
<dbReference type="PRINTS" id="PR00075">
    <property type="entry name" value="FACDDSATRASE"/>
</dbReference>